<protein>
    <recommendedName>
        <fullName>Probable uridylyltransferase SE_1761</fullName>
        <ecNumber>2.7.7.-</ecNumber>
    </recommendedName>
</protein>
<evidence type="ECO:0000250" key="1">
    <source>
        <dbReference type="UniProtKB" id="Q9M9P3"/>
    </source>
</evidence>
<evidence type="ECO:0000305" key="2"/>
<gene>
    <name type="ordered locus">SE_1761</name>
</gene>
<dbReference type="EC" id="2.7.7.-"/>
<dbReference type="EMBL" id="AE015929">
    <property type="protein sequence ID" value="AAO05402.1"/>
    <property type="molecule type" value="Genomic_DNA"/>
</dbReference>
<dbReference type="RefSeq" id="NP_765316.1">
    <property type="nucleotide sequence ID" value="NC_004461.1"/>
</dbReference>
<dbReference type="RefSeq" id="WP_002485391.1">
    <property type="nucleotide sequence ID" value="NC_004461.1"/>
</dbReference>
<dbReference type="SMR" id="Q8CNG6"/>
<dbReference type="KEGG" id="sep:SE_1761"/>
<dbReference type="PATRIC" id="fig|176280.10.peg.1719"/>
<dbReference type="eggNOG" id="COG4284">
    <property type="taxonomic scope" value="Bacteria"/>
</dbReference>
<dbReference type="HOGENOM" id="CLU_025603_1_2_9"/>
<dbReference type="OrthoDB" id="9806910at2"/>
<dbReference type="Proteomes" id="UP000001411">
    <property type="component" value="Chromosome"/>
</dbReference>
<dbReference type="GO" id="GO:0070569">
    <property type="term" value="F:uridylyltransferase activity"/>
    <property type="evidence" value="ECO:0007669"/>
    <property type="project" value="InterPro"/>
</dbReference>
<dbReference type="CDD" id="cd04193">
    <property type="entry name" value="UDPGlcNAc_PPase"/>
    <property type="match status" value="1"/>
</dbReference>
<dbReference type="Gene3D" id="3.90.550.10">
    <property type="entry name" value="Spore Coat Polysaccharide Biosynthesis Protein SpsA, Chain A"/>
    <property type="match status" value="1"/>
</dbReference>
<dbReference type="InterPro" id="IPR029044">
    <property type="entry name" value="Nucleotide-diphossugar_trans"/>
</dbReference>
<dbReference type="InterPro" id="IPR039741">
    <property type="entry name" value="UDP-sugar_pyrophosphorylase"/>
</dbReference>
<dbReference type="InterPro" id="IPR002618">
    <property type="entry name" value="UDPGP_fam"/>
</dbReference>
<dbReference type="PANTHER" id="PTHR11952:SF2">
    <property type="entry name" value="LD24639P"/>
    <property type="match status" value="1"/>
</dbReference>
<dbReference type="PANTHER" id="PTHR11952">
    <property type="entry name" value="UDP- GLUCOSE PYROPHOSPHORYLASE"/>
    <property type="match status" value="1"/>
</dbReference>
<dbReference type="Pfam" id="PF01704">
    <property type="entry name" value="UDPGP"/>
    <property type="match status" value="1"/>
</dbReference>
<dbReference type="SUPFAM" id="SSF53448">
    <property type="entry name" value="Nucleotide-diphospho-sugar transferases"/>
    <property type="match status" value="1"/>
</dbReference>
<accession>Q8CNG6</accession>
<feature type="chain" id="PRO_0000271316" description="Probable uridylyltransferase SE_1761">
    <location>
        <begin position="1"/>
        <end position="395"/>
    </location>
</feature>
<feature type="binding site" evidence="1">
    <location>
        <begin position="99"/>
        <end position="102"/>
    </location>
    <ligand>
        <name>UTP</name>
        <dbReference type="ChEBI" id="CHEBI:46398"/>
    </ligand>
</feature>
<feature type="binding site" evidence="1">
    <location>
        <position position="113"/>
    </location>
    <ligand>
        <name>UTP</name>
        <dbReference type="ChEBI" id="CHEBI:46398"/>
    </ligand>
</feature>
<feature type="binding site" evidence="1">
    <location>
        <position position="178"/>
    </location>
    <ligand>
        <name>UTP</name>
        <dbReference type="ChEBI" id="CHEBI:46398"/>
    </ligand>
</feature>
<feature type="binding site" evidence="1">
    <location>
        <position position="204"/>
    </location>
    <ligand>
        <name>UTP</name>
        <dbReference type="ChEBI" id="CHEBI:46398"/>
    </ligand>
</feature>
<feature type="binding site" evidence="1">
    <location>
        <position position="235"/>
    </location>
    <ligand>
        <name>UTP</name>
        <dbReference type="ChEBI" id="CHEBI:46398"/>
    </ligand>
</feature>
<feature type="binding site" evidence="1">
    <location>
        <position position="344"/>
    </location>
    <ligand>
        <name>UTP</name>
        <dbReference type="ChEBI" id="CHEBI:46398"/>
    </ligand>
</feature>
<reference key="1">
    <citation type="journal article" date="2003" name="Mol. Microbiol.">
        <title>Genome-based analysis of virulence genes in a non-biofilm-forming Staphylococcus epidermidis strain (ATCC 12228).</title>
        <authorList>
            <person name="Zhang Y.-Q."/>
            <person name="Ren S.-X."/>
            <person name="Li H.-L."/>
            <person name="Wang Y.-X."/>
            <person name="Fu G."/>
            <person name="Yang J."/>
            <person name="Qin Z.-Q."/>
            <person name="Miao Y.-G."/>
            <person name="Wang W.-Y."/>
            <person name="Chen R.-S."/>
            <person name="Shen Y."/>
            <person name="Chen Z."/>
            <person name="Yuan Z.-H."/>
            <person name="Zhao G.-P."/>
            <person name="Qu D."/>
            <person name="Danchin A."/>
            <person name="Wen Y.-M."/>
        </authorList>
    </citation>
    <scope>NUCLEOTIDE SEQUENCE [LARGE SCALE GENOMIC DNA]</scope>
    <source>
        <strain>ATCC 12228 / FDA PCI 1200</strain>
    </source>
</reference>
<proteinExistence type="inferred from homology"/>
<name>URTF_STAES</name>
<keyword id="KW-0548">Nucleotidyltransferase</keyword>
<keyword id="KW-0808">Transferase</keyword>
<comment type="similarity">
    <text evidence="2">Belongs to the UDPGP type 1 family.</text>
</comment>
<sequence length="395" mass="45734">MLDKNQLEKYNQEHLYEYEKLMSSNEKNALDEKVDQLNLAEIQDLYQDLYVNRKTIDDVSSVSEVKYEVKSRLNEEERHTYEQKGYEAIRNGEFAVLLMAGGQGTRLGYKGPKGSFEIEGTSLFELQARQLIRLKEETGHTINWYIMTSDINHKDTIEYFKQHKYFNYDANHIHFFKQDNIVALSEEGKLVLNRDGHIMETPNGNGGVFKSLKKAGYLDKMQQDHVKYIFLNNIDNVLVKVLDPLFAGFTVTQSKDITSKTIQPKDSESVGRLVNVDCKDTVLEYSELDTDIVNQFNNANIGIHAFKLGFITSAVDRELPYHLAIKQLKQLDENFGVVERPTLKFELFYFDIFRYGTSFVTLQVPREEEFSPLKNKEGKDSVHTATEDLKRMDLI</sequence>
<organism>
    <name type="scientific">Staphylococcus epidermidis (strain ATCC 12228 / FDA PCI 1200)</name>
    <dbReference type="NCBI Taxonomy" id="176280"/>
    <lineage>
        <taxon>Bacteria</taxon>
        <taxon>Bacillati</taxon>
        <taxon>Bacillota</taxon>
        <taxon>Bacilli</taxon>
        <taxon>Bacillales</taxon>
        <taxon>Staphylococcaceae</taxon>
        <taxon>Staphylococcus</taxon>
    </lineage>
</organism>